<feature type="chain" id="PRO_1000063127" description="Imidazole glycerol phosphate synthase subunit HisF">
    <location>
        <begin position="1"/>
        <end position="266"/>
    </location>
</feature>
<feature type="active site" evidence="1">
    <location>
        <position position="11"/>
    </location>
</feature>
<feature type="active site" evidence="1">
    <location>
        <position position="130"/>
    </location>
</feature>
<reference key="1">
    <citation type="submission" date="2006-02" db="EMBL/GenBank/DDBJ databases">
        <title>Complete sequence of chromosome of Rhodoferax ferrireducens DSM 15236.</title>
        <authorList>
            <person name="Copeland A."/>
            <person name="Lucas S."/>
            <person name="Lapidus A."/>
            <person name="Barry K."/>
            <person name="Detter J.C."/>
            <person name="Glavina del Rio T."/>
            <person name="Hammon N."/>
            <person name="Israni S."/>
            <person name="Pitluck S."/>
            <person name="Brettin T."/>
            <person name="Bruce D."/>
            <person name="Han C."/>
            <person name="Tapia R."/>
            <person name="Gilna P."/>
            <person name="Kiss H."/>
            <person name="Schmutz J."/>
            <person name="Larimer F."/>
            <person name="Land M."/>
            <person name="Kyrpides N."/>
            <person name="Ivanova N."/>
            <person name="Richardson P."/>
        </authorList>
    </citation>
    <scope>NUCLEOTIDE SEQUENCE [LARGE SCALE GENOMIC DNA]</scope>
    <source>
        <strain>ATCC BAA-621 / DSM 15236 / T118</strain>
    </source>
</reference>
<dbReference type="EC" id="4.3.2.10" evidence="1"/>
<dbReference type="EMBL" id="CP000267">
    <property type="protein sequence ID" value="ABD70662.1"/>
    <property type="molecule type" value="Genomic_DNA"/>
</dbReference>
<dbReference type="RefSeq" id="WP_011465228.1">
    <property type="nucleotide sequence ID" value="NC_007908.1"/>
</dbReference>
<dbReference type="SMR" id="Q21U91"/>
<dbReference type="STRING" id="338969.Rfer_2951"/>
<dbReference type="KEGG" id="rfr:Rfer_2951"/>
<dbReference type="eggNOG" id="COG0107">
    <property type="taxonomic scope" value="Bacteria"/>
</dbReference>
<dbReference type="HOGENOM" id="CLU_048577_4_0_4"/>
<dbReference type="OrthoDB" id="9781903at2"/>
<dbReference type="UniPathway" id="UPA00031">
    <property type="reaction ID" value="UER00010"/>
</dbReference>
<dbReference type="Proteomes" id="UP000008332">
    <property type="component" value="Chromosome"/>
</dbReference>
<dbReference type="GO" id="GO:0005737">
    <property type="term" value="C:cytoplasm"/>
    <property type="evidence" value="ECO:0007669"/>
    <property type="project" value="UniProtKB-SubCell"/>
</dbReference>
<dbReference type="GO" id="GO:0000107">
    <property type="term" value="F:imidazoleglycerol-phosphate synthase activity"/>
    <property type="evidence" value="ECO:0007669"/>
    <property type="project" value="UniProtKB-UniRule"/>
</dbReference>
<dbReference type="GO" id="GO:0016829">
    <property type="term" value="F:lyase activity"/>
    <property type="evidence" value="ECO:0007669"/>
    <property type="project" value="UniProtKB-KW"/>
</dbReference>
<dbReference type="GO" id="GO:0000105">
    <property type="term" value="P:L-histidine biosynthetic process"/>
    <property type="evidence" value="ECO:0007669"/>
    <property type="project" value="UniProtKB-UniRule"/>
</dbReference>
<dbReference type="CDD" id="cd04731">
    <property type="entry name" value="HisF"/>
    <property type="match status" value="1"/>
</dbReference>
<dbReference type="FunFam" id="3.20.20.70:FF:000006">
    <property type="entry name" value="Imidazole glycerol phosphate synthase subunit HisF"/>
    <property type="match status" value="1"/>
</dbReference>
<dbReference type="Gene3D" id="3.20.20.70">
    <property type="entry name" value="Aldolase class I"/>
    <property type="match status" value="1"/>
</dbReference>
<dbReference type="HAMAP" id="MF_01013">
    <property type="entry name" value="HisF"/>
    <property type="match status" value="1"/>
</dbReference>
<dbReference type="InterPro" id="IPR013785">
    <property type="entry name" value="Aldolase_TIM"/>
</dbReference>
<dbReference type="InterPro" id="IPR006062">
    <property type="entry name" value="His_biosynth"/>
</dbReference>
<dbReference type="InterPro" id="IPR004651">
    <property type="entry name" value="HisF"/>
</dbReference>
<dbReference type="InterPro" id="IPR050064">
    <property type="entry name" value="IGPS_HisA/HisF"/>
</dbReference>
<dbReference type="InterPro" id="IPR011060">
    <property type="entry name" value="RibuloseP-bd_barrel"/>
</dbReference>
<dbReference type="NCBIfam" id="TIGR00735">
    <property type="entry name" value="hisF"/>
    <property type="match status" value="1"/>
</dbReference>
<dbReference type="PANTHER" id="PTHR21235:SF2">
    <property type="entry name" value="IMIDAZOLE GLYCEROL PHOSPHATE SYNTHASE HISHF"/>
    <property type="match status" value="1"/>
</dbReference>
<dbReference type="PANTHER" id="PTHR21235">
    <property type="entry name" value="IMIDAZOLE GLYCEROL PHOSPHATE SYNTHASE SUBUNIT HISF/H IGP SYNTHASE SUBUNIT HISF/H"/>
    <property type="match status" value="1"/>
</dbReference>
<dbReference type="Pfam" id="PF00977">
    <property type="entry name" value="His_biosynth"/>
    <property type="match status" value="1"/>
</dbReference>
<dbReference type="SUPFAM" id="SSF51366">
    <property type="entry name" value="Ribulose-phoshate binding barrel"/>
    <property type="match status" value="1"/>
</dbReference>
<proteinExistence type="inferred from homology"/>
<organism>
    <name type="scientific">Albidiferax ferrireducens (strain ATCC BAA-621 / DSM 15236 / T118)</name>
    <name type="common">Rhodoferax ferrireducens</name>
    <dbReference type="NCBI Taxonomy" id="338969"/>
    <lineage>
        <taxon>Bacteria</taxon>
        <taxon>Pseudomonadati</taxon>
        <taxon>Pseudomonadota</taxon>
        <taxon>Betaproteobacteria</taxon>
        <taxon>Burkholderiales</taxon>
        <taxon>Comamonadaceae</taxon>
        <taxon>Rhodoferax</taxon>
    </lineage>
</organism>
<comment type="function">
    <text evidence="1">IGPS catalyzes the conversion of PRFAR and glutamine to IGP, AICAR and glutamate. The HisF subunit catalyzes the cyclization activity that produces IGP and AICAR from PRFAR using the ammonia provided by the HisH subunit.</text>
</comment>
<comment type="catalytic activity">
    <reaction evidence="1">
        <text>5-[(5-phospho-1-deoxy-D-ribulos-1-ylimino)methylamino]-1-(5-phospho-beta-D-ribosyl)imidazole-4-carboxamide + L-glutamine = D-erythro-1-(imidazol-4-yl)glycerol 3-phosphate + 5-amino-1-(5-phospho-beta-D-ribosyl)imidazole-4-carboxamide + L-glutamate + H(+)</text>
        <dbReference type="Rhea" id="RHEA:24793"/>
        <dbReference type="ChEBI" id="CHEBI:15378"/>
        <dbReference type="ChEBI" id="CHEBI:29985"/>
        <dbReference type="ChEBI" id="CHEBI:58278"/>
        <dbReference type="ChEBI" id="CHEBI:58359"/>
        <dbReference type="ChEBI" id="CHEBI:58475"/>
        <dbReference type="ChEBI" id="CHEBI:58525"/>
        <dbReference type="EC" id="4.3.2.10"/>
    </reaction>
</comment>
<comment type="pathway">
    <text evidence="1">Amino-acid biosynthesis; L-histidine biosynthesis; L-histidine from 5-phospho-alpha-D-ribose 1-diphosphate: step 5/9.</text>
</comment>
<comment type="subunit">
    <text evidence="1">Heterodimer of HisH and HisF.</text>
</comment>
<comment type="subcellular location">
    <subcellularLocation>
        <location evidence="1">Cytoplasm</location>
    </subcellularLocation>
</comment>
<comment type="similarity">
    <text evidence="1">Belongs to the HisA/HisF family.</text>
</comment>
<keyword id="KW-0028">Amino-acid biosynthesis</keyword>
<keyword id="KW-0963">Cytoplasm</keyword>
<keyword id="KW-0368">Histidine biosynthesis</keyword>
<keyword id="KW-0456">Lyase</keyword>
<keyword id="KW-1185">Reference proteome</keyword>
<sequence length="266" mass="27843">MLAKRIIPCLDVTGGRVVKGVNFVELRDAGDPVEIAARYNDQGADELTFLDITATSDGRDLILHIIEAVASQVFIPLTVGGGVRTVDDVRRLLNAGADKTSFNSAAIANPQVIRDASRKYGAQCIVVAIDAKRRLATDVGRLDANGQAVGEGWDVYSHGGRKNTGLDAVIWARLMAELGAGEILLTSMDRDGTKAGFDLALTRAVSDAVSVPVIASGGVGTLDHLADGIQIGGADAVLAASIFHYGEFTVAQAKAHMAARGIPVRI</sequence>
<name>HIS6_ALBFT</name>
<protein>
    <recommendedName>
        <fullName evidence="1">Imidazole glycerol phosphate synthase subunit HisF</fullName>
        <ecNumber evidence="1">4.3.2.10</ecNumber>
    </recommendedName>
    <alternativeName>
        <fullName evidence="1">IGP synthase cyclase subunit</fullName>
    </alternativeName>
    <alternativeName>
        <fullName evidence="1">IGP synthase subunit HisF</fullName>
    </alternativeName>
    <alternativeName>
        <fullName evidence="1">ImGP synthase subunit HisF</fullName>
        <shortName evidence="1">IGPS subunit HisF</shortName>
    </alternativeName>
</protein>
<accession>Q21U91</accession>
<gene>
    <name evidence="1" type="primary">hisF</name>
    <name type="ordered locus">Rfer_2951</name>
</gene>
<evidence type="ECO:0000255" key="1">
    <source>
        <dbReference type="HAMAP-Rule" id="MF_01013"/>
    </source>
</evidence>